<organism>
    <name type="scientific">Drosophila melanogaster</name>
    <name type="common">Fruit fly</name>
    <dbReference type="NCBI Taxonomy" id="7227"/>
    <lineage>
        <taxon>Eukaryota</taxon>
        <taxon>Metazoa</taxon>
        <taxon>Ecdysozoa</taxon>
        <taxon>Arthropoda</taxon>
        <taxon>Hexapoda</taxon>
        <taxon>Insecta</taxon>
        <taxon>Pterygota</taxon>
        <taxon>Neoptera</taxon>
        <taxon>Endopterygota</taxon>
        <taxon>Diptera</taxon>
        <taxon>Brachycera</taxon>
        <taxon>Muscomorpha</taxon>
        <taxon>Ephydroidea</taxon>
        <taxon>Drosophilidae</taxon>
        <taxon>Drosophila</taxon>
        <taxon>Sophophora</taxon>
    </lineage>
</organism>
<evidence type="ECO:0000255" key="1"/>
<evidence type="ECO:0000255" key="2">
    <source>
        <dbReference type="PROSITE-ProRule" id="PRU00434"/>
    </source>
</evidence>
<evidence type="ECO:0000255" key="3">
    <source>
        <dbReference type="PROSITE-ProRule" id="PRU00441"/>
    </source>
</evidence>
<evidence type="ECO:0000256" key="4">
    <source>
        <dbReference type="SAM" id="MobiDB-lite"/>
    </source>
</evidence>
<evidence type="ECO:0000269" key="5">
    <source>
    </source>
</evidence>
<evidence type="ECO:0000305" key="6"/>
<proteinExistence type="evidence at transcript level"/>
<feature type="chain" id="PRO_0000093433" description="Probable multidrug resistance-associated protein lethal(2)03659">
    <location>
        <begin position="1"/>
        <end position="1374"/>
    </location>
</feature>
<feature type="transmembrane region" description="Helical" evidence="3">
    <location>
        <begin position="159"/>
        <end position="179"/>
    </location>
</feature>
<feature type="transmembrane region" description="Helical" evidence="3">
    <location>
        <begin position="205"/>
        <end position="225"/>
    </location>
</feature>
<feature type="transmembrane region" description="Helical" evidence="3">
    <location>
        <begin position="282"/>
        <end position="302"/>
    </location>
</feature>
<feature type="transmembrane region" description="Helical" evidence="3">
    <location>
        <begin position="305"/>
        <end position="325"/>
    </location>
</feature>
<feature type="transmembrane region" description="Helical" evidence="3">
    <location>
        <begin position="404"/>
        <end position="424"/>
    </location>
</feature>
<feature type="transmembrane region" description="Helical" evidence="3">
    <location>
        <begin position="426"/>
        <end position="446"/>
    </location>
</feature>
<feature type="transmembrane region" description="Helical" evidence="3">
    <location>
        <begin position="787"/>
        <end position="807"/>
    </location>
</feature>
<feature type="transmembrane region" description="Helical" evidence="3">
    <location>
        <begin position="845"/>
        <end position="865"/>
    </location>
</feature>
<feature type="transmembrane region" description="Helical" evidence="3">
    <location>
        <begin position="913"/>
        <end position="933"/>
    </location>
</feature>
<feature type="transmembrane region" description="Helical" evidence="3">
    <location>
        <begin position="938"/>
        <end position="958"/>
    </location>
</feature>
<feature type="transmembrane region" description="Helical" evidence="3">
    <location>
        <begin position="1025"/>
        <end position="1045"/>
    </location>
</feature>
<feature type="domain" description="ABC transmembrane type-1 1" evidence="3">
    <location>
        <begin position="168"/>
        <end position="449"/>
    </location>
</feature>
<feature type="domain" description="ABC transporter 1" evidence="2">
    <location>
        <begin position="499"/>
        <end position="722"/>
    </location>
</feature>
<feature type="domain" description="ABC transmembrane type-1 2" evidence="3">
    <location>
        <begin position="793"/>
        <end position="1079"/>
    </location>
</feature>
<feature type="domain" description="ABC transporter 2" evidence="2">
    <location>
        <begin position="1119"/>
        <end position="1352"/>
    </location>
</feature>
<feature type="region of interest" description="Disordered" evidence="4">
    <location>
        <begin position="1"/>
        <end position="40"/>
    </location>
</feature>
<feature type="region of interest" description="Disordered" evidence="4">
    <location>
        <begin position="466"/>
        <end position="492"/>
    </location>
</feature>
<feature type="region of interest" description="Disordered" evidence="4">
    <location>
        <begin position="723"/>
        <end position="766"/>
    </location>
</feature>
<feature type="binding site" evidence="2">
    <location>
        <begin position="534"/>
        <end position="541"/>
    </location>
    <ligand>
        <name>ATP</name>
        <dbReference type="ChEBI" id="CHEBI:30616"/>
        <label>1</label>
    </ligand>
</feature>
<feature type="binding site" evidence="2">
    <location>
        <begin position="1153"/>
        <end position="1160"/>
    </location>
    <ligand>
        <name>ATP</name>
        <dbReference type="ChEBI" id="CHEBI:30616"/>
        <label>2</label>
    </ligand>
</feature>
<feature type="glycosylation site" description="N-linked (GlcNAc...) asparagine" evidence="1">
    <location>
        <position position="561"/>
    </location>
</feature>
<feature type="glycosylation site" description="N-linked (GlcNAc...) asparagine" evidence="1">
    <location>
        <position position="1254"/>
    </location>
</feature>
<feature type="glycosylation site" description="N-linked (GlcNAc...) asparagine" evidence="1">
    <location>
        <position position="1353"/>
    </location>
</feature>
<protein>
    <recommendedName>
        <fullName>Probable multidrug resistance-associated protein lethal(2)03659</fullName>
    </recommendedName>
    <alternativeName>
        <fullName>Wunen region A protein</fullName>
    </alternativeName>
</protein>
<comment type="function">
    <text evidence="5">Vital for development.</text>
</comment>
<comment type="subcellular location">
    <subcellularLocation>
        <location>Membrane</location>
        <topology>Multi-pass membrane protein</topology>
    </subcellularLocation>
</comment>
<comment type="tissue specificity">
    <text evidence="5">Uniform expression in embryos.</text>
</comment>
<comment type="similarity">
    <text evidence="6">Belongs to the ABC transporter superfamily. ABCC family. Conjugate transporter (TC 3.A.1.208) subfamily.</text>
</comment>
<comment type="sequence caution" evidence="6">
    <conflict type="erroneous translation">
        <sequence resource="EMBL-CDS" id="AAC47448"/>
    </conflict>
    <text>Wrong choice of frame. Uses complementary DNA strand, thus describing the wrong sequence.</text>
</comment>
<dbReference type="EMBL" id="AE013599">
    <property type="protein sequence ID" value="AAF58947.3"/>
    <property type="molecule type" value="Genomic_DNA"/>
</dbReference>
<dbReference type="EMBL" id="U73821">
    <property type="protein sequence ID" value="AAC47448.1"/>
    <property type="status" value="ALT_SEQ"/>
    <property type="molecule type" value="Genomic_DNA"/>
</dbReference>
<dbReference type="RefSeq" id="NP_610482.3">
    <property type="nucleotide sequence ID" value="NM_136638.4"/>
</dbReference>
<dbReference type="SMR" id="P91660"/>
<dbReference type="BioGRID" id="71049">
    <property type="interactions" value="1"/>
</dbReference>
<dbReference type="FunCoup" id="P91660">
    <property type="interactions" value="72"/>
</dbReference>
<dbReference type="IntAct" id="P91660">
    <property type="interactions" value="3"/>
</dbReference>
<dbReference type="STRING" id="7227.FBpp0291666"/>
<dbReference type="GlyCosmos" id="P91660">
    <property type="glycosylation" value="3 sites, No reported glycans"/>
</dbReference>
<dbReference type="GlyGen" id="P91660">
    <property type="glycosylation" value="3 sites"/>
</dbReference>
<dbReference type="PaxDb" id="7227-FBpp0291666"/>
<dbReference type="EnsemblMetazoa" id="FBtr0302504">
    <property type="protein sequence ID" value="FBpp0291666"/>
    <property type="gene ID" value="FBgn0010549"/>
</dbReference>
<dbReference type="GeneID" id="47905"/>
<dbReference type="KEGG" id="dme:Dmel_CG8799"/>
<dbReference type="AGR" id="FB:FBgn0010549"/>
<dbReference type="FlyBase" id="FBgn0010549">
    <property type="gene designation" value="l(2)03659"/>
</dbReference>
<dbReference type="VEuPathDB" id="VectorBase:FBgn0010549"/>
<dbReference type="eggNOG" id="KOG0054">
    <property type="taxonomic scope" value="Eukaryota"/>
</dbReference>
<dbReference type="GeneTree" id="ENSGT00940000165791"/>
<dbReference type="HOGENOM" id="CLU_000604_27_1_1"/>
<dbReference type="InParanoid" id="P91660"/>
<dbReference type="OMA" id="TRSFCFN"/>
<dbReference type="OrthoDB" id="6500128at2759"/>
<dbReference type="PhylomeDB" id="P91660"/>
<dbReference type="Reactome" id="R-DME-382556">
    <property type="pathway name" value="ABC-family proteins mediated transport"/>
</dbReference>
<dbReference type="Reactome" id="R-DME-8856825">
    <property type="pathway name" value="Cargo recognition for clathrin-mediated endocytosis"/>
</dbReference>
<dbReference type="Reactome" id="R-DME-8856828">
    <property type="pathway name" value="Clathrin-mediated endocytosis"/>
</dbReference>
<dbReference type="Reactome" id="R-DME-9646399">
    <property type="pathway name" value="Aggrephagy"/>
</dbReference>
<dbReference type="SignaLink" id="P91660"/>
<dbReference type="BioGRID-ORCS" id="47905">
    <property type="hits" value="0 hits in 1 CRISPR screen"/>
</dbReference>
<dbReference type="GenomeRNAi" id="47905"/>
<dbReference type="PRO" id="PR:P91660"/>
<dbReference type="Proteomes" id="UP000000803">
    <property type="component" value="Chromosome 2R"/>
</dbReference>
<dbReference type="Bgee" id="FBgn0010549">
    <property type="expression patterns" value="Expressed in adult Malpighian tubule principal cell of lower ureter in Malpighian tubule and 21 other cell types or tissues"/>
</dbReference>
<dbReference type="ExpressionAtlas" id="P91660">
    <property type="expression patterns" value="baseline and differential"/>
</dbReference>
<dbReference type="GO" id="GO:0016020">
    <property type="term" value="C:membrane"/>
    <property type="evidence" value="ECO:0000318"/>
    <property type="project" value="GO_Central"/>
</dbReference>
<dbReference type="GO" id="GO:0140359">
    <property type="term" value="F:ABC-type transporter activity"/>
    <property type="evidence" value="ECO:0007669"/>
    <property type="project" value="InterPro"/>
</dbReference>
<dbReference type="GO" id="GO:0005524">
    <property type="term" value="F:ATP binding"/>
    <property type="evidence" value="ECO:0007669"/>
    <property type="project" value="UniProtKB-KW"/>
</dbReference>
<dbReference type="GO" id="GO:0016887">
    <property type="term" value="F:ATP hydrolysis activity"/>
    <property type="evidence" value="ECO:0007669"/>
    <property type="project" value="InterPro"/>
</dbReference>
<dbReference type="GO" id="GO:0042626">
    <property type="term" value="F:ATPase-coupled transmembrane transporter activity"/>
    <property type="evidence" value="ECO:0000318"/>
    <property type="project" value="GO_Central"/>
</dbReference>
<dbReference type="GO" id="GO:0015562">
    <property type="term" value="F:efflux transmembrane transporter activity"/>
    <property type="evidence" value="ECO:0000314"/>
    <property type="project" value="FlyBase"/>
</dbReference>
<dbReference type="GO" id="GO:0008514">
    <property type="term" value="F:organic anion transmembrane transporter activity"/>
    <property type="evidence" value="ECO:0000314"/>
    <property type="project" value="FlyBase"/>
</dbReference>
<dbReference type="GO" id="GO:0015711">
    <property type="term" value="P:organic anion transport"/>
    <property type="evidence" value="ECO:0000314"/>
    <property type="project" value="FlyBase"/>
</dbReference>
<dbReference type="GO" id="GO:0055085">
    <property type="term" value="P:transmembrane transport"/>
    <property type="evidence" value="ECO:0000318"/>
    <property type="project" value="GO_Central"/>
</dbReference>
<dbReference type="CDD" id="cd18579">
    <property type="entry name" value="ABC_6TM_ABCC_D1"/>
    <property type="match status" value="1"/>
</dbReference>
<dbReference type="CDD" id="cd03250">
    <property type="entry name" value="ABCC_MRP_domain1"/>
    <property type="match status" value="1"/>
</dbReference>
<dbReference type="CDD" id="cd03244">
    <property type="entry name" value="ABCC_MRP_domain2"/>
    <property type="match status" value="1"/>
</dbReference>
<dbReference type="FunFam" id="1.20.1560.10:FF:000343">
    <property type="entry name" value="Lethal (2) 03659, isoform C"/>
    <property type="match status" value="1"/>
</dbReference>
<dbReference type="FunFam" id="1.20.1560.10:FF:000026">
    <property type="entry name" value="Multidrug resistance-associated protein lethal(2)03659"/>
    <property type="match status" value="1"/>
</dbReference>
<dbReference type="FunFam" id="3.40.50.300:FF:000163">
    <property type="entry name" value="Multidrug resistance-associated protein member 4"/>
    <property type="match status" value="1"/>
</dbReference>
<dbReference type="FunFam" id="3.40.50.300:FF:000482">
    <property type="entry name" value="Multidrug resistance-associated protein member 4"/>
    <property type="match status" value="1"/>
</dbReference>
<dbReference type="Gene3D" id="1.20.1560.10">
    <property type="entry name" value="ABC transporter type 1, transmembrane domain"/>
    <property type="match status" value="2"/>
</dbReference>
<dbReference type="Gene3D" id="3.40.50.300">
    <property type="entry name" value="P-loop containing nucleotide triphosphate hydrolases"/>
    <property type="match status" value="2"/>
</dbReference>
<dbReference type="InterPro" id="IPR003593">
    <property type="entry name" value="AAA+_ATPase"/>
</dbReference>
<dbReference type="InterPro" id="IPR011527">
    <property type="entry name" value="ABC1_TM_dom"/>
</dbReference>
<dbReference type="InterPro" id="IPR036640">
    <property type="entry name" value="ABC1_TM_sf"/>
</dbReference>
<dbReference type="InterPro" id="IPR003439">
    <property type="entry name" value="ABC_transporter-like_ATP-bd"/>
</dbReference>
<dbReference type="InterPro" id="IPR017871">
    <property type="entry name" value="ABC_transporter-like_CS"/>
</dbReference>
<dbReference type="InterPro" id="IPR050173">
    <property type="entry name" value="ABC_transporter_C-like"/>
</dbReference>
<dbReference type="InterPro" id="IPR044746">
    <property type="entry name" value="ABCC_6TM_D1"/>
</dbReference>
<dbReference type="InterPro" id="IPR027417">
    <property type="entry name" value="P-loop_NTPase"/>
</dbReference>
<dbReference type="PANTHER" id="PTHR24223">
    <property type="entry name" value="ATP-BINDING CASSETTE SUB-FAMILY C"/>
    <property type="match status" value="1"/>
</dbReference>
<dbReference type="PANTHER" id="PTHR24223:SF448">
    <property type="entry name" value="FI20146P1-RELATED"/>
    <property type="match status" value="1"/>
</dbReference>
<dbReference type="Pfam" id="PF00664">
    <property type="entry name" value="ABC_membrane"/>
    <property type="match status" value="2"/>
</dbReference>
<dbReference type="Pfam" id="PF00005">
    <property type="entry name" value="ABC_tran"/>
    <property type="match status" value="2"/>
</dbReference>
<dbReference type="SMART" id="SM00382">
    <property type="entry name" value="AAA"/>
    <property type="match status" value="2"/>
</dbReference>
<dbReference type="SUPFAM" id="SSF90123">
    <property type="entry name" value="ABC transporter transmembrane region"/>
    <property type="match status" value="2"/>
</dbReference>
<dbReference type="SUPFAM" id="SSF52540">
    <property type="entry name" value="P-loop containing nucleoside triphosphate hydrolases"/>
    <property type="match status" value="2"/>
</dbReference>
<dbReference type="PROSITE" id="PS50929">
    <property type="entry name" value="ABC_TM1F"/>
    <property type="match status" value="2"/>
</dbReference>
<dbReference type="PROSITE" id="PS00211">
    <property type="entry name" value="ABC_TRANSPORTER_1"/>
    <property type="match status" value="2"/>
</dbReference>
<dbReference type="PROSITE" id="PS50893">
    <property type="entry name" value="ABC_TRANSPORTER_2"/>
    <property type="match status" value="2"/>
</dbReference>
<name>L259_DROME</name>
<gene>
    <name type="primary">l(2)03659</name>
    <name type="ORF">CG8799</name>
</gene>
<keyword id="KW-0067">ATP-binding</keyword>
<keyword id="KW-0217">Developmental protein</keyword>
<keyword id="KW-0325">Glycoprotein</keyword>
<keyword id="KW-0472">Membrane</keyword>
<keyword id="KW-0547">Nucleotide-binding</keyword>
<keyword id="KW-1185">Reference proteome</keyword>
<keyword id="KW-0677">Repeat</keyword>
<keyword id="KW-0812">Transmembrane</keyword>
<keyword id="KW-1133">Transmembrane helix</keyword>
<keyword id="KW-0813">Transport</keyword>
<reference evidence="6" key="1">
    <citation type="journal article" date="2000" name="Science">
        <title>The genome sequence of Drosophila melanogaster.</title>
        <authorList>
            <person name="Adams M.D."/>
            <person name="Celniker S.E."/>
            <person name="Holt R.A."/>
            <person name="Evans C.A."/>
            <person name="Gocayne J.D."/>
            <person name="Amanatides P.G."/>
            <person name="Scherer S.E."/>
            <person name="Li P.W."/>
            <person name="Hoskins R.A."/>
            <person name="Galle R.F."/>
            <person name="George R.A."/>
            <person name="Lewis S.E."/>
            <person name="Richards S."/>
            <person name="Ashburner M."/>
            <person name="Henderson S.N."/>
            <person name="Sutton G.G."/>
            <person name="Wortman J.R."/>
            <person name="Yandell M.D."/>
            <person name="Zhang Q."/>
            <person name="Chen L.X."/>
            <person name="Brandon R.C."/>
            <person name="Rogers Y.-H.C."/>
            <person name="Blazej R.G."/>
            <person name="Champe M."/>
            <person name="Pfeiffer B.D."/>
            <person name="Wan K.H."/>
            <person name="Doyle C."/>
            <person name="Baxter E.G."/>
            <person name="Helt G."/>
            <person name="Nelson C.R."/>
            <person name="Miklos G.L.G."/>
            <person name="Abril J.F."/>
            <person name="Agbayani A."/>
            <person name="An H.-J."/>
            <person name="Andrews-Pfannkoch C."/>
            <person name="Baldwin D."/>
            <person name="Ballew R.M."/>
            <person name="Basu A."/>
            <person name="Baxendale J."/>
            <person name="Bayraktaroglu L."/>
            <person name="Beasley E.M."/>
            <person name="Beeson K.Y."/>
            <person name="Benos P.V."/>
            <person name="Berman B.P."/>
            <person name="Bhandari D."/>
            <person name="Bolshakov S."/>
            <person name="Borkova D."/>
            <person name="Botchan M.R."/>
            <person name="Bouck J."/>
            <person name="Brokstein P."/>
            <person name="Brottier P."/>
            <person name="Burtis K.C."/>
            <person name="Busam D.A."/>
            <person name="Butler H."/>
            <person name="Cadieu E."/>
            <person name="Center A."/>
            <person name="Chandra I."/>
            <person name="Cherry J.M."/>
            <person name="Cawley S."/>
            <person name="Dahlke C."/>
            <person name="Davenport L.B."/>
            <person name="Davies P."/>
            <person name="de Pablos B."/>
            <person name="Delcher A."/>
            <person name="Deng Z."/>
            <person name="Mays A.D."/>
            <person name="Dew I."/>
            <person name="Dietz S.M."/>
            <person name="Dodson K."/>
            <person name="Doup L.E."/>
            <person name="Downes M."/>
            <person name="Dugan-Rocha S."/>
            <person name="Dunkov B.C."/>
            <person name="Dunn P."/>
            <person name="Durbin K.J."/>
            <person name="Evangelista C.C."/>
            <person name="Ferraz C."/>
            <person name="Ferriera S."/>
            <person name="Fleischmann W."/>
            <person name="Fosler C."/>
            <person name="Gabrielian A.E."/>
            <person name="Garg N.S."/>
            <person name="Gelbart W.M."/>
            <person name="Glasser K."/>
            <person name="Glodek A."/>
            <person name="Gong F."/>
            <person name="Gorrell J.H."/>
            <person name="Gu Z."/>
            <person name="Guan P."/>
            <person name="Harris M."/>
            <person name="Harris N.L."/>
            <person name="Harvey D.A."/>
            <person name="Heiman T.J."/>
            <person name="Hernandez J.R."/>
            <person name="Houck J."/>
            <person name="Hostin D."/>
            <person name="Houston K.A."/>
            <person name="Howland T.J."/>
            <person name="Wei M.-H."/>
            <person name="Ibegwam C."/>
            <person name="Jalali M."/>
            <person name="Kalush F."/>
            <person name="Karpen G.H."/>
            <person name="Ke Z."/>
            <person name="Kennison J.A."/>
            <person name="Ketchum K.A."/>
            <person name="Kimmel B.E."/>
            <person name="Kodira C.D."/>
            <person name="Kraft C.L."/>
            <person name="Kravitz S."/>
            <person name="Kulp D."/>
            <person name="Lai Z."/>
            <person name="Lasko P."/>
            <person name="Lei Y."/>
            <person name="Levitsky A.A."/>
            <person name="Li J.H."/>
            <person name="Li Z."/>
            <person name="Liang Y."/>
            <person name="Lin X."/>
            <person name="Liu X."/>
            <person name="Mattei B."/>
            <person name="McIntosh T.C."/>
            <person name="McLeod M.P."/>
            <person name="McPherson D."/>
            <person name="Merkulov G."/>
            <person name="Milshina N.V."/>
            <person name="Mobarry C."/>
            <person name="Morris J."/>
            <person name="Moshrefi A."/>
            <person name="Mount S.M."/>
            <person name="Moy M."/>
            <person name="Murphy B."/>
            <person name="Murphy L."/>
            <person name="Muzny D.M."/>
            <person name="Nelson D.L."/>
            <person name="Nelson D.R."/>
            <person name="Nelson K.A."/>
            <person name="Nixon K."/>
            <person name="Nusskern D.R."/>
            <person name="Pacleb J.M."/>
            <person name="Palazzolo M."/>
            <person name="Pittman G.S."/>
            <person name="Pan S."/>
            <person name="Pollard J."/>
            <person name="Puri V."/>
            <person name="Reese M.G."/>
            <person name="Reinert K."/>
            <person name="Remington K."/>
            <person name="Saunders R.D.C."/>
            <person name="Scheeler F."/>
            <person name="Shen H."/>
            <person name="Shue B.C."/>
            <person name="Siden-Kiamos I."/>
            <person name="Simpson M."/>
            <person name="Skupski M.P."/>
            <person name="Smith T.J."/>
            <person name="Spier E."/>
            <person name="Spradling A.C."/>
            <person name="Stapleton M."/>
            <person name="Strong R."/>
            <person name="Sun E."/>
            <person name="Svirskas R."/>
            <person name="Tector C."/>
            <person name="Turner R."/>
            <person name="Venter E."/>
            <person name="Wang A.H."/>
            <person name="Wang X."/>
            <person name="Wang Z.-Y."/>
            <person name="Wassarman D.A."/>
            <person name="Weinstock G.M."/>
            <person name="Weissenbach J."/>
            <person name="Williams S.M."/>
            <person name="Woodage T."/>
            <person name="Worley K.C."/>
            <person name="Wu D."/>
            <person name="Yang S."/>
            <person name="Yao Q.A."/>
            <person name="Ye J."/>
            <person name="Yeh R.-F."/>
            <person name="Zaveri J.S."/>
            <person name="Zhan M."/>
            <person name="Zhang G."/>
            <person name="Zhao Q."/>
            <person name="Zheng L."/>
            <person name="Zheng X.H."/>
            <person name="Zhong F.N."/>
            <person name="Zhong W."/>
            <person name="Zhou X."/>
            <person name="Zhu S.C."/>
            <person name="Zhu X."/>
            <person name="Smith H.O."/>
            <person name="Gibbs R.A."/>
            <person name="Myers E.W."/>
            <person name="Rubin G.M."/>
            <person name="Venter J.C."/>
        </authorList>
    </citation>
    <scope>NUCLEOTIDE SEQUENCE [LARGE SCALE GENOMIC DNA]</scope>
    <source>
        <strain>Berkeley</strain>
    </source>
</reference>
<reference key="2">
    <citation type="journal article" date="2002" name="Genome Biol.">
        <title>Annotation of the Drosophila melanogaster euchromatic genome: a systematic review.</title>
        <authorList>
            <person name="Misra S."/>
            <person name="Crosby M.A."/>
            <person name="Mungall C.J."/>
            <person name="Matthews B.B."/>
            <person name="Campbell K.S."/>
            <person name="Hradecky P."/>
            <person name="Huang Y."/>
            <person name="Kaminker J.S."/>
            <person name="Millburn G.H."/>
            <person name="Prochnik S.E."/>
            <person name="Smith C.D."/>
            <person name="Tupy J.L."/>
            <person name="Whitfield E.J."/>
            <person name="Bayraktaroglu L."/>
            <person name="Berman B.P."/>
            <person name="Bettencourt B.R."/>
            <person name="Celniker S.E."/>
            <person name="de Grey A.D.N.J."/>
            <person name="Drysdale R.A."/>
            <person name="Harris N.L."/>
            <person name="Richter J."/>
            <person name="Russo S."/>
            <person name="Schroeder A.J."/>
            <person name="Shu S.Q."/>
            <person name="Stapleton M."/>
            <person name="Yamada C."/>
            <person name="Ashburner M."/>
            <person name="Gelbart W.M."/>
            <person name="Rubin G.M."/>
            <person name="Lewis S.E."/>
        </authorList>
    </citation>
    <scope>GENOME REANNOTATION</scope>
    <source>
        <strain>Berkeley</strain>
    </source>
</reference>
<reference evidence="6" key="3">
    <citation type="journal article" date="1997" name="Nature">
        <title>The Drosophila protein Wunen repels migrating germ cells.</title>
        <authorList>
            <person name="Zhang N."/>
            <person name="Zhang J.P."/>
            <person name="Purcell K.J."/>
            <person name="Chen Y."/>
            <person name="Howard K."/>
        </authorList>
    </citation>
    <scope>NUCLEOTIDE SEQUENCE [GENOMIC DNA] OF 891-1004</scope>
    <scope>FUNCTION</scope>
    <scope>TISSUE SPECIFICITY</scope>
</reference>
<sequence length="1374" mass="153195">MDKQPVLEPTFDSVSERENTSIEESSLLENNGFDHRNKDESLSVNTSPPLVCRKCFELGHQTENCKQKLTVNSENNSAQNEKEKVLPENPRARSNFISSLCFWYTIPIFRKGYRKTLDSTDLYRPLEEQKSDILGNRLCASWERELKNDGRSPSLVRALLRVFGWQLGFPGLAIFVVELGLRTLQPIFLVKLISYFSGEPDAANAGFYYAVAQIVISALTVMILTPTTFGIHHVCFKMRVAMGSMIFRKALRLTKGALGDTTSGHVVNLISNDIPRLDSAPYTVHYLWVGPLQVLVITYLMYQEIGISAVFGVLFMLLFMPIQMYLGTRTSAIQLKAAERTDNRIRMVNEIISAIQVLKMYAWEQPFEQMVTHAREKEMNTIRQGQYIRGFDFARRIVLSRVAIFLSLVGYVILGKVFTPEIAFMITAYYNVLLAAMSIYVPSAIIQTAQFLTSIRRVEQFMQSEELGSSDKSEGPSKDTVPGNPPSNNNEADLLKSAISIRDLKAKWDPNSPDYTLSGINLEIKPGSVVAVIGLTGSGKSSLIQAILGELKANSGQLQVNGSLSYTSQESWLFSGTVRQNILFGQPMDSQRYEEVVKKCALERDFDLLPLRDNTIVGERGATLSGGQKARISLARSVYRKASIYLLDDPLSAVDASVARHLFDQCVRGHLRGSTVVLVTHQEQFLPHVDQIVILANGQIKALGDYESLLKTGLITGLGSLSKTDKAKTEEQEPLNLNSPDNKNEVTPIKENSEQTVGGSSSGKEHVERQESGGISLALYRKYFQAGGGLVAFLVMLSSSVLAQVAVTGGDYFLTYWVKKESTAAGHGEMEDMESKSMDVYKYTLIIILSVIMNLSSSFLLFNIAKKASIRLHNTIFNRVTRADMHFFSINKHGSILNRFTKDMSQVDEVLPVVLVDVMQIALWLAGIIIVIANVNPLLLVPTLMLSVIFYHLRNLYLKTSRDLKRVEAINRSPVYSHLAASLNGLTTIRALDAQRVLEKEFDSYQDAHSSAFFMYISTSQAFGYCMNCICVIYISIITLSFFAFPPGNGADVGLVITQAMGLIDMVQWGVRQTAELENTMTAVERVVEYESIEPEGMLEAPDDKKPPKTWPEQGEIIFKELNLRYTPNAKAENVLKSLSFVIQPREKVGIVGRTGAGKSSLINALFRLSYTDGSVLIDTRDTRQMGLHDLRRQISIIPQEPVLFSGTMRYNLDPFDEYSDEKLWGCLEEVKLKEVVSDLPDGLASKISEGGTNFSVGQRQLVCLARAILRENRILVMDEATANVDPQTDGLIQATIRSKFRDCTVLTIAHRLHTIIDSDKVMVMDAGRVVEFGSPYELMTKSDSKVFHNLVNQSGRASYEGLLKIAQETFESS</sequence>
<accession>P91660</accession>
<accession>Q9V571</accession>
<accession>Q9V572</accession>